<dbReference type="EC" id="3.6.1.41" evidence="1"/>
<dbReference type="EMBL" id="CP000687">
    <property type="protein sequence ID" value="ABY69325.1"/>
    <property type="molecule type" value="Genomic_DNA"/>
</dbReference>
<dbReference type="RefSeq" id="WP_012262951.1">
    <property type="nucleotide sequence ID" value="NC_010278.1"/>
</dbReference>
<dbReference type="SMR" id="B0BP40"/>
<dbReference type="KEGG" id="apj:APJL_0762"/>
<dbReference type="HOGENOM" id="CLU_056184_2_0_6"/>
<dbReference type="Proteomes" id="UP000008547">
    <property type="component" value="Chromosome"/>
</dbReference>
<dbReference type="GO" id="GO:0008803">
    <property type="term" value="F:bis(5'-nucleosyl)-tetraphosphatase (symmetrical) activity"/>
    <property type="evidence" value="ECO:0007669"/>
    <property type="project" value="UniProtKB-UniRule"/>
</dbReference>
<dbReference type="CDD" id="cd07422">
    <property type="entry name" value="MPP_ApaH"/>
    <property type="match status" value="1"/>
</dbReference>
<dbReference type="Gene3D" id="3.60.21.10">
    <property type="match status" value="1"/>
</dbReference>
<dbReference type="HAMAP" id="MF_00199">
    <property type="entry name" value="ApaH"/>
    <property type="match status" value="1"/>
</dbReference>
<dbReference type="InterPro" id="IPR004617">
    <property type="entry name" value="ApaH"/>
</dbReference>
<dbReference type="InterPro" id="IPR004843">
    <property type="entry name" value="Calcineurin-like_PHP_ApaH"/>
</dbReference>
<dbReference type="InterPro" id="IPR029052">
    <property type="entry name" value="Metallo-depent_PP-like"/>
</dbReference>
<dbReference type="NCBIfam" id="TIGR00668">
    <property type="entry name" value="apaH"/>
    <property type="match status" value="1"/>
</dbReference>
<dbReference type="NCBIfam" id="NF001204">
    <property type="entry name" value="PRK00166.1"/>
    <property type="match status" value="1"/>
</dbReference>
<dbReference type="PANTHER" id="PTHR40942">
    <property type="match status" value="1"/>
</dbReference>
<dbReference type="PANTHER" id="PTHR40942:SF4">
    <property type="entry name" value="CYTOCHROME C5"/>
    <property type="match status" value="1"/>
</dbReference>
<dbReference type="Pfam" id="PF00149">
    <property type="entry name" value="Metallophos"/>
    <property type="match status" value="1"/>
</dbReference>
<dbReference type="PIRSF" id="PIRSF000903">
    <property type="entry name" value="B5n-ttraPtase_sm"/>
    <property type="match status" value="1"/>
</dbReference>
<dbReference type="SUPFAM" id="SSF56300">
    <property type="entry name" value="Metallo-dependent phosphatases"/>
    <property type="match status" value="1"/>
</dbReference>
<name>APAH_ACTPJ</name>
<comment type="function">
    <text evidence="1">Hydrolyzes diadenosine 5',5'''-P1,P4-tetraphosphate to yield ADP.</text>
</comment>
<comment type="catalytic activity">
    <reaction evidence="1">
        <text>P(1),P(4)-bis(5'-adenosyl) tetraphosphate + H2O = 2 ADP + 2 H(+)</text>
        <dbReference type="Rhea" id="RHEA:24252"/>
        <dbReference type="ChEBI" id="CHEBI:15377"/>
        <dbReference type="ChEBI" id="CHEBI:15378"/>
        <dbReference type="ChEBI" id="CHEBI:58141"/>
        <dbReference type="ChEBI" id="CHEBI:456216"/>
        <dbReference type="EC" id="3.6.1.41"/>
    </reaction>
</comment>
<comment type="similarity">
    <text evidence="1">Belongs to the Ap4A hydrolase family.</text>
</comment>
<sequence>MATYVVGDLHGCFDELQLLLKQVNYNPAQDELWLTGDLVARGAKSLECLRFVKDPKNNAKTILGNHDLHLLATLLGIKKVKPNDQVDAIFAAEDRADLQNWLRNQPLLIQHPKYGFLLTHAGISPEWNLTETIACAREAEAVLQSGHYADYIAQMYENTPDHWSAEWQGIERWRYIINVFTRMRFCYADKRLDFACKLPVEDAPNELKPWFKLDNPLFHQQDIIFGHWASLMGKADKPNIYALDTGCAWGNHLTMIRWEDKQIFTQERLK</sequence>
<accession>B0BP40</accession>
<evidence type="ECO:0000255" key="1">
    <source>
        <dbReference type="HAMAP-Rule" id="MF_00199"/>
    </source>
</evidence>
<reference key="1">
    <citation type="journal article" date="2008" name="PLoS ONE">
        <title>Genome biology of Actinobacillus pleuropneumoniae JL03, an isolate of serotype 3 prevalent in China.</title>
        <authorList>
            <person name="Xu Z."/>
            <person name="Zhou Y."/>
            <person name="Li L."/>
            <person name="Zhou R."/>
            <person name="Xiao S."/>
            <person name="Wan Y."/>
            <person name="Zhang S."/>
            <person name="Wang K."/>
            <person name="Li W."/>
            <person name="Li L."/>
            <person name="Jin H."/>
            <person name="Kang M."/>
            <person name="Dalai B."/>
            <person name="Li T."/>
            <person name="Liu L."/>
            <person name="Cheng Y."/>
            <person name="Zhang L."/>
            <person name="Xu T."/>
            <person name="Zheng H."/>
            <person name="Pu S."/>
            <person name="Wang B."/>
            <person name="Gu W."/>
            <person name="Zhang X.L."/>
            <person name="Zhu G.-F."/>
            <person name="Wang S."/>
            <person name="Zhao G.-P."/>
            <person name="Chen H."/>
        </authorList>
    </citation>
    <scope>NUCLEOTIDE SEQUENCE [LARGE SCALE GENOMIC DNA]</scope>
    <source>
        <strain>JL03</strain>
    </source>
</reference>
<protein>
    <recommendedName>
        <fullName evidence="1">Bis(5'-nucleosyl)-tetraphosphatase, symmetrical</fullName>
        <ecNumber evidence="1">3.6.1.41</ecNumber>
    </recommendedName>
    <alternativeName>
        <fullName evidence="1">Ap4A hydrolase</fullName>
    </alternativeName>
    <alternativeName>
        <fullName evidence="1">Diadenosine 5',5'''-P1,P4-tetraphosphate pyrophosphohydrolase</fullName>
    </alternativeName>
    <alternativeName>
        <fullName evidence="1">Diadenosine tetraphosphatase</fullName>
    </alternativeName>
</protein>
<proteinExistence type="inferred from homology"/>
<keyword id="KW-0378">Hydrolase</keyword>
<organism>
    <name type="scientific">Actinobacillus pleuropneumoniae serotype 3 (strain JL03)</name>
    <dbReference type="NCBI Taxonomy" id="434271"/>
    <lineage>
        <taxon>Bacteria</taxon>
        <taxon>Pseudomonadati</taxon>
        <taxon>Pseudomonadota</taxon>
        <taxon>Gammaproteobacteria</taxon>
        <taxon>Pasteurellales</taxon>
        <taxon>Pasteurellaceae</taxon>
        <taxon>Actinobacillus</taxon>
    </lineage>
</organism>
<gene>
    <name evidence="1" type="primary">apaH</name>
    <name type="ordered locus">APJL_0762</name>
</gene>
<feature type="chain" id="PRO_1000099314" description="Bis(5'-nucleosyl)-tetraphosphatase, symmetrical">
    <location>
        <begin position="1"/>
        <end position="270"/>
    </location>
</feature>